<protein>
    <recommendedName>
        <fullName evidence="5">gSG7 salivary protein</fullName>
    </recommendedName>
    <alternativeName>
        <fullName evidence="5">Anopheles albimanus complement inhibitor</fullName>
        <shortName evidence="5 6 7">Albicin</shortName>
    </alternativeName>
</protein>
<proteinExistence type="evidence at protein level"/>
<organism evidence="9">
    <name type="scientific">Anopheles albimanus</name>
    <name type="common">New world malaria mosquito</name>
    <dbReference type="NCBI Taxonomy" id="7167"/>
    <lineage>
        <taxon>Eukaryota</taxon>
        <taxon>Metazoa</taxon>
        <taxon>Ecdysozoa</taxon>
        <taxon>Arthropoda</taxon>
        <taxon>Hexapoda</taxon>
        <taxon>Insecta</taxon>
        <taxon>Pterygota</taxon>
        <taxon>Neoptera</taxon>
        <taxon>Endopterygota</taxon>
        <taxon>Diptera</taxon>
        <taxon>Nematocera</taxon>
        <taxon>Culicoidea</taxon>
        <taxon>Culicidae</taxon>
        <taxon>Anophelinae</taxon>
        <taxon>Anopheles</taxon>
    </lineage>
</organism>
<sequence>MAVRMTVILPLAMALICLMQAEPATAANNHIRTVLKLFRTIDLDDSKKSFYLTAAKYGIQTQLREPIIRIVGGYLPSTKLSEACVKNMISEVYEIEGDFYSKFSYACEDHAPYSVECLEDARDDYLTQLVELFKETKKCLRE</sequence>
<dbReference type="RefSeq" id="XP_035783647.1">
    <property type="nucleotide sequence ID" value="XM_035927754.1"/>
</dbReference>
<dbReference type="PDB" id="6XKE">
    <property type="method" value="X-ray"/>
    <property type="resolution" value="1.55 A"/>
    <property type="chains" value="A/B/C=27-142"/>
</dbReference>
<dbReference type="PDB" id="8UH2">
    <property type="method" value="EM"/>
    <property type="resolution" value="3.59 A"/>
    <property type="chains" value="C/D=27-142"/>
</dbReference>
<dbReference type="PDB" id="8UIN">
    <property type="method" value="EM"/>
    <property type="resolution" value="3.86 A"/>
    <property type="chains" value="C/D=27-142"/>
</dbReference>
<dbReference type="PDBsum" id="6XKE"/>
<dbReference type="PDBsum" id="8UH2"/>
<dbReference type="PDBsum" id="8UIN"/>
<dbReference type="EMDB" id="EMD-42244"/>
<dbReference type="EMDB" id="EMD-42300"/>
<dbReference type="SMR" id="A0A1Y9G8D0"/>
<dbReference type="EnsemblMetazoa" id="AALB015994-RA">
    <property type="protein sequence ID" value="AALB015994-PA"/>
    <property type="gene ID" value="AALB015994"/>
</dbReference>
<dbReference type="GeneID" id="118461901"/>
<dbReference type="VEuPathDB" id="VectorBase:AALB015994"/>
<dbReference type="VEuPathDB" id="VectorBase:AALB20_034292"/>
<dbReference type="OrthoDB" id="7719128at2759"/>
<dbReference type="Proteomes" id="UP000069272">
    <property type="component" value="Chromosome 2L"/>
</dbReference>
<dbReference type="GO" id="GO:0005576">
    <property type="term" value="C:extracellular region"/>
    <property type="evidence" value="ECO:0007669"/>
    <property type="project" value="UniProtKB-SubCell"/>
</dbReference>
<dbReference type="GO" id="GO:0090729">
    <property type="term" value="F:toxin activity"/>
    <property type="evidence" value="ECO:0007669"/>
    <property type="project" value="UniProtKB-KW"/>
</dbReference>
<dbReference type="InterPro" id="IPR056799">
    <property type="entry name" value="ALL3/gSG7_salivary-like_helix"/>
</dbReference>
<dbReference type="Pfam" id="PF25001">
    <property type="entry name" value="Aegyptin_C"/>
    <property type="match status" value="1"/>
</dbReference>
<comment type="function">
    <text evidence="2 3">Salivary protein that potently inhibits the alternative pathway of complement system activation in the host while having no inhibitory effect on the classical or lectin pathways (PubMed:27307559). Binds and stabilizes activated host C3-convertase complex C3bBb (C3-CFB) and inhibits its convertase activity (PubMed:27307559). Enhances accumulation of C3bBb on immobilized properdin (PubMed:27307559, PubMed:33199367).</text>
</comment>
<comment type="subunit">
    <text evidence="2 4">Associates with activated host C3-convertase complex C3bBb (C3-CFB) (PubMed:27307559, PubMed:38802531). Interacts with host properdin (CFP), a regulator of the alternate pathway of complement (PubMed:27307559).</text>
</comment>
<comment type="subcellular location">
    <subcellularLocation>
        <location evidence="8">Secreted</location>
    </subcellularLocation>
</comment>
<comment type="tissue specificity">
    <text evidence="2">Female salivary gland (at protein level).</text>
</comment>
<comment type="miscellaneous">
    <text evidence="2 3">The protein is equally effective in normal human and properdin-depleted serum indicating that properdin is not involved in its inhibitory mechanism.</text>
</comment>
<evidence type="ECO:0000255" key="1"/>
<evidence type="ECO:0000269" key="2">
    <source>
    </source>
</evidence>
<evidence type="ECO:0000269" key="3">
    <source>
    </source>
</evidence>
<evidence type="ECO:0000269" key="4">
    <source>
    </source>
</evidence>
<evidence type="ECO:0000303" key="5">
    <source>
    </source>
</evidence>
<evidence type="ECO:0000303" key="6">
    <source>
    </source>
</evidence>
<evidence type="ECO:0000303" key="7">
    <source>
    </source>
</evidence>
<evidence type="ECO:0000305" key="8"/>
<evidence type="ECO:0000312" key="9">
    <source>
        <dbReference type="Proteomes" id="UP000069272"/>
    </source>
</evidence>
<evidence type="ECO:0007744" key="10">
    <source>
        <dbReference type="PDB" id="6XKE"/>
    </source>
</evidence>
<evidence type="ECO:0007744" key="11">
    <source>
        <dbReference type="PDB" id="8UH2"/>
    </source>
</evidence>
<evidence type="ECO:0007744" key="12">
    <source>
        <dbReference type="PDB" id="8UIN"/>
    </source>
</evidence>
<evidence type="ECO:0007829" key="13">
    <source>
        <dbReference type="PDB" id="6XKE"/>
    </source>
</evidence>
<name>GSG7_ANOAL</name>
<reference evidence="8" key="1">
    <citation type="journal article" date="2016" name="J. Immunol.">
        <title>An Inhibitor of the Alternative Pathway of Complement in Saliva of New World Anopheline Mosquitoes.</title>
        <authorList>
            <person name="Mendes-Sousa A.F."/>
            <person name="Queiroz D.C."/>
            <person name="Vale V.F."/>
            <person name="Ribeiro J.M."/>
            <person name="Valenzuela J.G."/>
            <person name="Gontijo N.F."/>
            <person name="Andersen J.F."/>
        </authorList>
    </citation>
    <scope>IDENTIFICATION BY MASS SPECTROMETRY</scope>
    <scope>FUNCTION</scope>
    <scope>INTERACTION WITH HOST C3-CONVERTASE COMPLEX AND CFP</scope>
    <scope>TISSUE SPECIFICITY</scope>
</reference>
<reference evidence="10" key="2">
    <citation type="journal article" date="2021" name="J. Biol. Chem.">
        <title>Salivary complement inhibitors from mosquitoes: Structure and mechanism of action.</title>
        <authorList>
            <person name="Strayer E.C."/>
            <person name="Lu S."/>
            <person name="Ribeiro J."/>
            <person name="Andersen J.F."/>
        </authorList>
    </citation>
    <scope>X-RAY CRYSTALLOGRAPHY (1.55 ANGSTROMS) OF 27-142</scope>
    <scope>FUNCTION</scope>
    <scope>DISULFIDE BONDS</scope>
</reference>
<reference evidence="11 12" key="3">
    <citation type="journal article" date="2024" name="Commun. Biol.">
        <title>Mechanism of complement inhibition by a mosquito protein revealed through cryo-EM.</title>
        <authorList>
            <person name="Andersen J.F."/>
            <person name="Lei H."/>
            <person name="Strayer E.C."/>
            <person name="Pham V."/>
            <person name="Ribeiro J.M.C."/>
        </authorList>
    </citation>
    <scope>STRUCTURE BY ELECTRON MICROSCOPY (3.59 ANGSTROMS) OF 27-142</scope>
    <scope>INTERACTION WITH HOST C3-CONVERTASE</scope>
    <scope>DISULFIDE BONDS</scope>
</reference>
<keyword id="KW-0002">3D-structure</keyword>
<keyword id="KW-1216">Complement system impairing toxin</keyword>
<keyword id="KW-1015">Disulfide bond</keyword>
<keyword id="KW-0964">Secreted</keyword>
<keyword id="KW-0732">Signal</keyword>
<keyword id="KW-0800">Toxin</keyword>
<accession>A0A1Y9G8D0</accession>
<feature type="signal peptide" evidence="1">
    <location>
        <begin position="1"/>
        <end position="26"/>
    </location>
</feature>
<feature type="chain" id="PRO_0000460619" description="gSG7 salivary protein" evidence="1">
    <location>
        <begin position="27"/>
        <end position="142"/>
    </location>
</feature>
<feature type="disulfide bond" evidence="3 4 10 11 12">
    <location>
        <begin position="84"/>
        <end position="139"/>
    </location>
</feature>
<feature type="disulfide bond" evidence="3 4 10 11 12">
    <location>
        <begin position="107"/>
        <end position="117"/>
    </location>
</feature>
<feature type="helix" evidence="13">
    <location>
        <begin position="28"/>
        <end position="39"/>
    </location>
</feature>
<feature type="helix" evidence="13">
    <location>
        <begin position="49"/>
        <end position="62"/>
    </location>
</feature>
<feature type="helix" evidence="13">
    <location>
        <begin position="64"/>
        <end position="72"/>
    </location>
</feature>
<feature type="helix" evidence="13">
    <location>
        <begin position="82"/>
        <end position="103"/>
    </location>
</feature>
<feature type="turn" evidence="13">
    <location>
        <begin position="104"/>
        <end position="106"/>
    </location>
</feature>
<feature type="strand" evidence="13">
    <location>
        <begin position="108"/>
        <end position="110"/>
    </location>
</feature>
<feature type="helix" evidence="13">
    <location>
        <begin position="115"/>
        <end position="139"/>
    </location>
</feature>